<accession>Q8XAY9</accession>
<accession>Q7ADZ4</accession>
<comment type="function">
    <text evidence="1">Part of the ABC transporter complex LsrABCD involved in autoinducer 2 (AI-2) import. Binds AI-2 and delivers it to the LsrC and LsrD permeases (By similarity).</text>
</comment>
<comment type="subunit">
    <text evidence="1">The complex is composed of two ATP-binding proteins (LsrA), two transmembrane proteins (LsrC and LsrD) and a solute-binding protein (LsrB).</text>
</comment>
<comment type="subcellular location">
    <subcellularLocation>
        <location evidence="3">Periplasm</location>
    </subcellularLocation>
</comment>
<comment type="similarity">
    <text evidence="3">Belongs to the bacterial solute-binding protein 2 family.</text>
</comment>
<proteinExistence type="inferred from homology"/>
<keyword id="KW-0574">Periplasm</keyword>
<keyword id="KW-1185">Reference proteome</keyword>
<keyword id="KW-0732">Signal</keyword>
<evidence type="ECO:0000250" key="1"/>
<evidence type="ECO:0000255" key="2"/>
<evidence type="ECO:0000305" key="3"/>
<name>LSRB_ECO57</name>
<organism>
    <name type="scientific">Escherichia coli O157:H7</name>
    <dbReference type="NCBI Taxonomy" id="83334"/>
    <lineage>
        <taxon>Bacteria</taxon>
        <taxon>Pseudomonadati</taxon>
        <taxon>Pseudomonadota</taxon>
        <taxon>Gammaproteobacteria</taxon>
        <taxon>Enterobacterales</taxon>
        <taxon>Enterobacteriaceae</taxon>
        <taxon>Escherichia</taxon>
    </lineage>
</organism>
<dbReference type="EMBL" id="AE005174">
    <property type="protein sequence ID" value="AAG56250.1"/>
    <property type="molecule type" value="Genomic_DNA"/>
</dbReference>
<dbReference type="EMBL" id="BA000007">
    <property type="protein sequence ID" value="BAB35546.1"/>
    <property type="molecule type" value="Genomic_DNA"/>
</dbReference>
<dbReference type="PIR" id="C90894">
    <property type="entry name" value="C90894"/>
</dbReference>
<dbReference type="PIR" id="F85723">
    <property type="entry name" value="F85723"/>
</dbReference>
<dbReference type="RefSeq" id="NP_310150.1">
    <property type="nucleotide sequence ID" value="NC_002695.1"/>
</dbReference>
<dbReference type="RefSeq" id="WP_000172466.1">
    <property type="nucleotide sequence ID" value="NZ_VOAI01000024.1"/>
</dbReference>
<dbReference type="SMR" id="Q8XAY9"/>
<dbReference type="STRING" id="155864.Z2189"/>
<dbReference type="GeneID" id="917324"/>
<dbReference type="KEGG" id="ece:Z2189"/>
<dbReference type="KEGG" id="ecs:ECs_2123"/>
<dbReference type="PATRIC" id="fig|386585.9.peg.2229"/>
<dbReference type="eggNOG" id="COG1879">
    <property type="taxonomic scope" value="Bacteria"/>
</dbReference>
<dbReference type="HOGENOM" id="CLU_037628_3_0_6"/>
<dbReference type="OMA" id="KQVNNPY"/>
<dbReference type="Proteomes" id="UP000000558">
    <property type="component" value="Chromosome"/>
</dbReference>
<dbReference type="Proteomes" id="UP000002519">
    <property type="component" value="Chromosome"/>
</dbReference>
<dbReference type="GO" id="GO:0043190">
    <property type="term" value="C:ATP-binding cassette (ABC) transporter complex"/>
    <property type="evidence" value="ECO:0007669"/>
    <property type="project" value="InterPro"/>
</dbReference>
<dbReference type="GO" id="GO:0030288">
    <property type="term" value="C:outer membrane-bounded periplasmic space"/>
    <property type="evidence" value="ECO:0007669"/>
    <property type="project" value="TreeGrafter"/>
</dbReference>
<dbReference type="GO" id="GO:0030246">
    <property type="term" value="F:carbohydrate binding"/>
    <property type="evidence" value="ECO:0007669"/>
    <property type="project" value="TreeGrafter"/>
</dbReference>
<dbReference type="GO" id="GO:0055085">
    <property type="term" value="P:transmembrane transport"/>
    <property type="evidence" value="ECO:0007669"/>
    <property type="project" value="UniProtKB-ARBA"/>
</dbReference>
<dbReference type="CDD" id="cd20003">
    <property type="entry name" value="PBP1_LsrB_Quorum_Sensing"/>
    <property type="match status" value="1"/>
</dbReference>
<dbReference type="Gene3D" id="3.40.50.2300">
    <property type="match status" value="2"/>
</dbReference>
<dbReference type="InterPro" id="IPR050555">
    <property type="entry name" value="Bact_Solute-Bind_Prot2"/>
</dbReference>
<dbReference type="InterPro" id="IPR030159">
    <property type="entry name" value="LsrB"/>
</dbReference>
<dbReference type="InterPro" id="IPR028082">
    <property type="entry name" value="Peripla_BP_I"/>
</dbReference>
<dbReference type="InterPro" id="IPR025997">
    <property type="entry name" value="SBP_2_dom"/>
</dbReference>
<dbReference type="NCBIfam" id="NF011937">
    <property type="entry name" value="PRK15408.1"/>
    <property type="match status" value="1"/>
</dbReference>
<dbReference type="PANTHER" id="PTHR30036:SF7">
    <property type="entry name" value="ABC TRANSPORTER PERIPLASMIC-BINDING PROTEIN YPHF"/>
    <property type="match status" value="1"/>
</dbReference>
<dbReference type="PANTHER" id="PTHR30036">
    <property type="entry name" value="D-XYLOSE-BINDING PERIPLASMIC PROTEIN"/>
    <property type="match status" value="1"/>
</dbReference>
<dbReference type="Pfam" id="PF13407">
    <property type="entry name" value="Peripla_BP_4"/>
    <property type="match status" value="1"/>
</dbReference>
<dbReference type="SUPFAM" id="SSF53822">
    <property type="entry name" value="Periplasmic binding protein-like I"/>
    <property type="match status" value="1"/>
</dbReference>
<protein>
    <recommendedName>
        <fullName>Autoinducer 2-binding protein LsrB</fullName>
        <shortName>AI-2-binding protein LsrB</shortName>
    </recommendedName>
</protein>
<reference key="1">
    <citation type="journal article" date="2001" name="Nature">
        <title>Genome sequence of enterohaemorrhagic Escherichia coli O157:H7.</title>
        <authorList>
            <person name="Perna N.T."/>
            <person name="Plunkett G. III"/>
            <person name="Burland V."/>
            <person name="Mau B."/>
            <person name="Glasner J.D."/>
            <person name="Rose D.J."/>
            <person name="Mayhew G.F."/>
            <person name="Evans P.S."/>
            <person name="Gregor J."/>
            <person name="Kirkpatrick H.A."/>
            <person name="Posfai G."/>
            <person name="Hackett J."/>
            <person name="Klink S."/>
            <person name="Boutin A."/>
            <person name="Shao Y."/>
            <person name="Miller L."/>
            <person name="Grotbeck E.J."/>
            <person name="Davis N.W."/>
            <person name="Lim A."/>
            <person name="Dimalanta E.T."/>
            <person name="Potamousis K."/>
            <person name="Apodaca J."/>
            <person name="Anantharaman T.S."/>
            <person name="Lin J."/>
            <person name="Yen G."/>
            <person name="Schwartz D.C."/>
            <person name="Welch R.A."/>
            <person name="Blattner F.R."/>
        </authorList>
    </citation>
    <scope>NUCLEOTIDE SEQUENCE [LARGE SCALE GENOMIC DNA]</scope>
    <source>
        <strain>O157:H7 / EDL933 / ATCC 700927 / EHEC</strain>
    </source>
</reference>
<reference key="2">
    <citation type="journal article" date="2001" name="DNA Res.">
        <title>Complete genome sequence of enterohemorrhagic Escherichia coli O157:H7 and genomic comparison with a laboratory strain K-12.</title>
        <authorList>
            <person name="Hayashi T."/>
            <person name="Makino K."/>
            <person name="Ohnishi M."/>
            <person name="Kurokawa K."/>
            <person name="Ishii K."/>
            <person name="Yokoyama K."/>
            <person name="Han C.-G."/>
            <person name="Ohtsubo E."/>
            <person name="Nakayama K."/>
            <person name="Murata T."/>
            <person name="Tanaka M."/>
            <person name="Tobe T."/>
            <person name="Iida T."/>
            <person name="Takami H."/>
            <person name="Honda T."/>
            <person name="Sasakawa C."/>
            <person name="Ogasawara N."/>
            <person name="Yasunaga T."/>
            <person name="Kuhara S."/>
            <person name="Shiba T."/>
            <person name="Hattori M."/>
            <person name="Shinagawa H."/>
        </authorList>
    </citation>
    <scope>NUCLEOTIDE SEQUENCE [LARGE SCALE GENOMIC DNA]</scope>
    <source>
        <strain>O157:H7 / Sakai / RIMD 0509952 / EHEC</strain>
    </source>
</reference>
<gene>
    <name type="primary">lsrB</name>
    <name type="ordered locus">Z2189</name>
    <name type="ordered locus">ECs2123</name>
</gene>
<sequence length="340" mass="36685">MTLHRFKKIALLSALGIAAISMNVQAAERIAFIPKLVGVGFFTSGGNGAQQAGKELGVDVTYDGPTEPSVSGQVQLINNFVNQGYNAIIVSAVSPDGLCPALKRAMQRGVRVLTWDSDTKPECRSYYINQGTPAQLGGMLVDMAARQVNKDKAKVAFFYSSPTVTDQNQWVKEAKAKIAKEHPGWEIVTTQFGYNDATKSLQTAEGILKAYSDLDAIIAPDANALPAAAQAAENLKNDKVAIVGFSTPNVMRPYVERGTVKEFGLWDVVQQGKISVYVADALLKKGSMKTGDKLDIQGVGQVEVSPNSVQGYDYEADGNGIVLLPERVIFNKENIGKYDF</sequence>
<feature type="signal peptide" evidence="2">
    <location>
        <begin position="1"/>
        <end position="26"/>
    </location>
</feature>
<feature type="chain" id="PRO_0000351320" description="Autoinducer 2-binding protein LsrB">
    <location>
        <begin position="27"/>
        <end position="340"/>
    </location>
</feature>